<evidence type="ECO:0000255" key="1">
    <source>
        <dbReference type="HAMAP-Rule" id="MF_01106"/>
    </source>
</evidence>
<proteinExistence type="inferred from homology"/>
<dbReference type="EC" id="2.3.1.35" evidence="1"/>
<dbReference type="EC" id="2.3.1.1" evidence="1"/>
<dbReference type="EMBL" id="AE005176">
    <property type="protein sequence ID" value="AAK04896.1"/>
    <property type="molecule type" value="Genomic_DNA"/>
</dbReference>
<dbReference type="PIR" id="F86724">
    <property type="entry name" value="F86724"/>
</dbReference>
<dbReference type="RefSeq" id="NP_266954.1">
    <property type="nucleotide sequence ID" value="NC_002662.1"/>
</dbReference>
<dbReference type="RefSeq" id="WP_010905565.1">
    <property type="nucleotide sequence ID" value="NC_002662.1"/>
</dbReference>
<dbReference type="SMR" id="Q9CHD4"/>
<dbReference type="MEROPS" id="T05.002"/>
<dbReference type="PaxDb" id="272623-L0105"/>
<dbReference type="EnsemblBacteria" id="AAK04896">
    <property type="protein sequence ID" value="AAK04896"/>
    <property type="gene ID" value="L0105"/>
</dbReference>
<dbReference type="KEGG" id="lla:L0105"/>
<dbReference type="PATRIC" id="fig|272623.7.peg.854"/>
<dbReference type="eggNOG" id="COG1364">
    <property type="taxonomic scope" value="Bacteria"/>
</dbReference>
<dbReference type="HOGENOM" id="CLU_027172_1_0_9"/>
<dbReference type="OrthoDB" id="9804242at2"/>
<dbReference type="UniPathway" id="UPA00068">
    <property type="reaction ID" value="UER00106"/>
</dbReference>
<dbReference type="UniPathway" id="UPA00068">
    <property type="reaction ID" value="UER00111"/>
</dbReference>
<dbReference type="Proteomes" id="UP000002196">
    <property type="component" value="Chromosome"/>
</dbReference>
<dbReference type="GO" id="GO:0005737">
    <property type="term" value="C:cytoplasm"/>
    <property type="evidence" value="ECO:0007669"/>
    <property type="project" value="UniProtKB-SubCell"/>
</dbReference>
<dbReference type="GO" id="GO:0004358">
    <property type="term" value="F:glutamate N-acetyltransferase activity"/>
    <property type="evidence" value="ECO:0007669"/>
    <property type="project" value="UniProtKB-UniRule"/>
</dbReference>
<dbReference type="GO" id="GO:0004042">
    <property type="term" value="F:L-glutamate N-acetyltransferase activity"/>
    <property type="evidence" value="ECO:0007669"/>
    <property type="project" value="UniProtKB-UniRule"/>
</dbReference>
<dbReference type="GO" id="GO:0006526">
    <property type="term" value="P:L-arginine biosynthetic process"/>
    <property type="evidence" value="ECO:0007669"/>
    <property type="project" value="UniProtKB-UniRule"/>
</dbReference>
<dbReference type="GO" id="GO:0006592">
    <property type="term" value="P:ornithine biosynthetic process"/>
    <property type="evidence" value="ECO:0007669"/>
    <property type="project" value="TreeGrafter"/>
</dbReference>
<dbReference type="CDD" id="cd02152">
    <property type="entry name" value="OAT"/>
    <property type="match status" value="1"/>
</dbReference>
<dbReference type="FunFam" id="3.60.70.12:FF:000001">
    <property type="entry name" value="Arginine biosynthesis bifunctional protein ArgJ, chloroplastic"/>
    <property type="match status" value="1"/>
</dbReference>
<dbReference type="FunFam" id="3.30.2330.10:FF:000001">
    <property type="entry name" value="Arginine biosynthesis bifunctional protein ArgJ, mitochondrial"/>
    <property type="match status" value="1"/>
</dbReference>
<dbReference type="Gene3D" id="3.10.20.340">
    <property type="entry name" value="ArgJ beta chain, C-terminal domain"/>
    <property type="match status" value="1"/>
</dbReference>
<dbReference type="Gene3D" id="3.60.70.12">
    <property type="entry name" value="L-amino peptidase D-ALA esterase/amidase"/>
    <property type="match status" value="1"/>
</dbReference>
<dbReference type="HAMAP" id="MF_01106">
    <property type="entry name" value="ArgJ"/>
    <property type="match status" value="1"/>
</dbReference>
<dbReference type="InterPro" id="IPR002813">
    <property type="entry name" value="Arg_biosynth_ArgJ"/>
</dbReference>
<dbReference type="InterPro" id="IPR016117">
    <property type="entry name" value="ArgJ-like_dom_sf"/>
</dbReference>
<dbReference type="InterPro" id="IPR042195">
    <property type="entry name" value="ArgJ_beta_C"/>
</dbReference>
<dbReference type="NCBIfam" id="TIGR00120">
    <property type="entry name" value="ArgJ"/>
    <property type="match status" value="1"/>
</dbReference>
<dbReference type="NCBIfam" id="NF003802">
    <property type="entry name" value="PRK05388.1"/>
    <property type="match status" value="1"/>
</dbReference>
<dbReference type="PANTHER" id="PTHR23100">
    <property type="entry name" value="ARGININE BIOSYNTHESIS BIFUNCTIONAL PROTEIN ARGJ"/>
    <property type="match status" value="1"/>
</dbReference>
<dbReference type="PANTHER" id="PTHR23100:SF0">
    <property type="entry name" value="ARGININE BIOSYNTHESIS BIFUNCTIONAL PROTEIN ARGJ, MITOCHONDRIAL"/>
    <property type="match status" value="1"/>
</dbReference>
<dbReference type="Pfam" id="PF01960">
    <property type="entry name" value="ArgJ"/>
    <property type="match status" value="1"/>
</dbReference>
<dbReference type="SUPFAM" id="SSF56266">
    <property type="entry name" value="DmpA/ArgJ-like"/>
    <property type="match status" value="1"/>
</dbReference>
<sequence length="396" mass="42174">MKEIKGTIASPKGFLADAVHAQLKYKNLDLGLILSQVPAAIAGVFTTNKVCAAPVLIDRQIVKKGQARAIICNSAVANAVTGEQGYANALKTQKLLAEKFELKAEEVAVCSTGVIGVQLPMEKIATGISKLSQNEGTAAYFAKAILTTDTQTKTINFEAEIGGQIVNMAGVCKGSGMIHPNMATMLAFITTDAKIAQALLQKTLSEIIETTFNQITVDGDTSTNDTVLLMANGQAKNNEILEGSSDYLLFKEMLAKVCQSLAKQIAADGEGATKLIEVTVKGAPNDLTARFIAKKIVGSSLVKTAIFGADPNWGRIISSIGQVANFEVSDIELKLQDELVLYHSTPVDFDAAFLSEKLKEDKIEIIADLNAGSGLGQAWGCDLTYKYVEINALYTS</sequence>
<gene>
    <name evidence="1" type="primary">argJ</name>
    <name type="ordered locus">LL0798</name>
    <name type="ORF">L0105</name>
</gene>
<keyword id="KW-0012">Acyltransferase</keyword>
<keyword id="KW-0028">Amino-acid biosynthesis</keyword>
<keyword id="KW-0055">Arginine biosynthesis</keyword>
<keyword id="KW-0068">Autocatalytic cleavage</keyword>
<keyword id="KW-0963">Cytoplasm</keyword>
<keyword id="KW-0511">Multifunctional enzyme</keyword>
<keyword id="KW-1185">Reference proteome</keyword>
<keyword id="KW-0808">Transferase</keyword>
<protein>
    <recommendedName>
        <fullName evidence="1">Arginine biosynthesis bifunctional protein ArgJ</fullName>
    </recommendedName>
    <domain>
        <recommendedName>
            <fullName evidence="1">Glutamate N-acetyltransferase</fullName>
            <ecNumber evidence="1">2.3.1.35</ecNumber>
        </recommendedName>
        <alternativeName>
            <fullName evidence="1">Ornithine acetyltransferase</fullName>
            <shortName evidence="1">OATase</shortName>
        </alternativeName>
        <alternativeName>
            <fullName evidence="1">Ornithine transacetylase</fullName>
        </alternativeName>
    </domain>
    <domain>
        <recommendedName>
            <fullName evidence="1">Amino-acid acetyltransferase</fullName>
            <ecNumber evidence="1">2.3.1.1</ecNumber>
        </recommendedName>
        <alternativeName>
            <fullName evidence="1">N-acetylglutamate synthase</fullName>
            <shortName evidence="1">AGSase</shortName>
        </alternativeName>
    </domain>
    <component>
        <recommendedName>
            <fullName evidence="1">Arginine biosynthesis bifunctional protein ArgJ alpha chain</fullName>
        </recommendedName>
    </component>
    <component>
        <recommendedName>
            <fullName evidence="1">Arginine biosynthesis bifunctional protein ArgJ beta chain</fullName>
        </recommendedName>
    </component>
</protein>
<organism>
    <name type="scientific">Lactococcus lactis subsp. lactis (strain IL1403)</name>
    <name type="common">Streptococcus lactis</name>
    <dbReference type="NCBI Taxonomy" id="272623"/>
    <lineage>
        <taxon>Bacteria</taxon>
        <taxon>Bacillati</taxon>
        <taxon>Bacillota</taxon>
        <taxon>Bacilli</taxon>
        <taxon>Lactobacillales</taxon>
        <taxon>Streptococcaceae</taxon>
        <taxon>Lactococcus</taxon>
    </lineage>
</organism>
<comment type="function">
    <text evidence="1">Catalyzes two activities which are involved in the cyclic version of arginine biosynthesis: the synthesis of N-acetylglutamate from glutamate and acetyl-CoA as the acetyl donor, and of ornithine by transacetylation between N(2)-acetylornithine and glutamate.</text>
</comment>
<comment type="catalytic activity">
    <reaction evidence="1">
        <text>N(2)-acetyl-L-ornithine + L-glutamate = N-acetyl-L-glutamate + L-ornithine</text>
        <dbReference type="Rhea" id="RHEA:15349"/>
        <dbReference type="ChEBI" id="CHEBI:29985"/>
        <dbReference type="ChEBI" id="CHEBI:44337"/>
        <dbReference type="ChEBI" id="CHEBI:46911"/>
        <dbReference type="ChEBI" id="CHEBI:57805"/>
        <dbReference type="EC" id="2.3.1.35"/>
    </reaction>
</comment>
<comment type="catalytic activity">
    <reaction evidence="1">
        <text>L-glutamate + acetyl-CoA = N-acetyl-L-glutamate + CoA + H(+)</text>
        <dbReference type="Rhea" id="RHEA:24292"/>
        <dbReference type="ChEBI" id="CHEBI:15378"/>
        <dbReference type="ChEBI" id="CHEBI:29985"/>
        <dbReference type="ChEBI" id="CHEBI:44337"/>
        <dbReference type="ChEBI" id="CHEBI:57287"/>
        <dbReference type="ChEBI" id="CHEBI:57288"/>
        <dbReference type="EC" id="2.3.1.1"/>
    </reaction>
</comment>
<comment type="pathway">
    <text evidence="1">Amino-acid biosynthesis; L-arginine biosynthesis; L-ornithine and N-acetyl-L-glutamate from L-glutamate and N(2)-acetyl-L-ornithine (cyclic): step 1/1.</text>
</comment>
<comment type="pathway">
    <text evidence="1">Amino-acid biosynthesis; L-arginine biosynthesis; N(2)-acetyl-L-ornithine from L-glutamate: step 1/4.</text>
</comment>
<comment type="subunit">
    <text evidence="1">Heterotetramer of two alpha and two beta chains.</text>
</comment>
<comment type="subcellular location">
    <subcellularLocation>
        <location evidence="1">Cytoplasm</location>
    </subcellularLocation>
</comment>
<comment type="similarity">
    <text evidence="1">Belongs to the ArgJ family.</text>
</comment>
<reference key="1">
    <citation type="journal article" date="2001" name="Genome Res.">
        <title>The complete genome sequence of the lactic acid bacterium Lactococcus lactis ssp. lactis IL1403.</title>
        <authorList>
            <person name="Bolotin A."/>
            <person name="Wincker P."/>
            <person name="Mauger S."/>
            <person name="Jaillon O."/>
            <person name="Malarme K."/>
            <person name="Weissenbach J."/>
            <person name="Ehrlich S.D."/>
            <person name="Sorokin A."/>
        </authorList>
    </citation>
    <scope>NUCLEOTIDE SEQUENCE [LARGE SCALE GENOMIC DNA]</scope>
    <source>
        <strain>IL1403</strain>
    </source>
</reference>
<name>ARGJ_LACLA</name>
<accession>Q9CHD4</accession>
<feature type="chain" id="PRO_0000002175" description="Arginine biosynthesis bifunctional protein ArgJ alpha chain" evidence="1">
    <location>
        <begin position="1"/>
        <end position="183"/>
    </location>
</feature>
<feature type="chain" id="PRO_0000002176" description="Arginine biosynthesis bifunctional protein ArgJ beta chain" evidence="1">
    <location>
        <begin position="184"/>
        <end position="396"/>
    </location>
</feature>
<feature type="active site" description="Nucleophile" evidence="1">
    <location>
        <position position="184"/>
    </location>
</feature>
<feature type="binding site" evidence="1">
    <location>
        <position position="147"/>
    </location>
    <ligand>
        <name>substrate</name>
    </ligand>
</feature>
<feature type="binding site" evidence="1">
    <location>
        <position position="173"/>
    </location>
    <ligand>
        <name>substrate</name>
    </ligand>
</feature>
<feature type="binding site" evidence="1">
    <location>
        <position position="184"/>
    </location>
    <ligand>
        <name>substrate</name>
    </ligand>
</feature>
<feature type="binding site" evidence="1">
    <location>
        <position position="270"/>
    </location>
    <ligand>
        <name>substrate</name>
    </ligand>
</feature>
<feature type="binding site" evidence="1">
    <location>
        <position position="391"/>
    </location>
    <ligand>
        <name>substrate</name>
    </ligand>
</feature>
<feature type="binding site" evidence="1">
    <location>
        <position position="396"/>
    </location>
    <ligand>
        <name>substrate</name>
    </ligand>
</feature>
<feature type="site" description="Involved in the stabilization of negative charge on the oxyanion by the formation of the oxyanion hole" evidence="1">
    <location>
        <position position="112"/>
    </location>
</feature>
<feature type="site" description="Involved in the stabilization of negative charge on the oxyanion by the formation of the oxyanion hole" evidence="1">
    <location>
        <position position="113"/>
    </location>
</feature>
<feature type="site" description="Cleavage; by autolysis" evidence="1">
    <location>
        <begin position="183"/>
        <end position="184"/>
    </location>
</feature>